<sequence>MSSDVSQYTIGGVKIMFPCKAYPSQLAMMNAIVKGLNNRQHCLLESPTGSGKSLALLCSALSWQQSLYEKSLLKSSCEKEDREPAASLPCRCVCHSRSESSEATAGASHGAACSNNYETGGSVKHGDQLSDTECKENNTLASKLSAKKRASACGNECDDFQVERKRIRPLETEQQVRKRHCFSKEVQLVDALEVYNQRKNGELIVHSEKSVKNTSPQTLFSSCTECSCSSGKETRKDSGNTKKKANGDQTFIPKIFFGTRTHKQIAQITRELKRTAYSGVPMTILSSRDYTCIHPVVSSSNSNRNELCVELLEGKHGKSCLYYHGVHKLSEHYALQSAHNTYQAWDIEDLVSLGKKLRACPYFAARELMVGADIVFCPYNYLLDPQIRESMEINLKGQVVILDEAHNIEDSAREAVSYSVTESQLNAAREELDFMVNNNIRQKDHEQLRAMCCSLTNWLRESSSQLVETGYETSCKVWSGKEMLNHFHDMGITNISFPILQKHLSAVLEKEEKISMFGKEELVEIPIVSSATQIVLKGLFMVLLYLFKDNSRFADDYRVALQQTYAWTNDNQPDVSDTSAFFTKTKHKRNLRHKTVVHMLNFWCLNPAVAFSDLNDVRTVVLTSGTLSPMDSFSSELGVKFSIQLEANHVIRNSQVWVGTIGTGPNGRKLCATFQHTETFEFQDEVGALLLSVCQKVGQGILCFLPSYKLLDKLKDRWIHTGLWRNLELVKTVIAEPQGGAKSDFDELLKIYYDAIKFKGEKDGALLIAVCRGKVSEGLDFCDENARAVITIGIPFPNVKDLQVELKRKYNDQHKTTRGLLPGSQWYEIQAYRALNQALGRCIRHRSDWGALILVDDRFRNNPNKYITGLSKWIRQQVQHHENFGSALESLHAFAERNQKGIDFSSQCSNEVFHVPLNSKEPSSASQQEATIHLSPDVPVKSEEQSFVPETHLTTTINSINPGPSNQPGGQKVDVESCSHNGIQRRKHMDSTPRRPANKTEKKSDRTNSDFMKEHCCFKPLTSTPLPVATNCVSTASSKQRKNVNSASELIGGVNQCQSSFTLEHKPSIPESHLETTNFSVKSTEAPVAEEHLDEQKLQIEPCSELPSVGGRPELSVLEISAEDEDESLYFTPELYDDAESEEQEMRPLDPDENQIECGKPTVADDLFVISTSKTLSEPKEMINDDGRNTSLHGTMLSDISKNSTVNIEKMTNGEEAEQVESQEVDTKKRKISLSRSRNKGVSPFLLDSTST</sequence>
<name>FANCJ_CHICK</name>
<feature type="chain" id="PRO_0000055175" description="Fanconi anemia group J protein homolog">
    <location>
        <begin position="1"/>
        <end position="1252"/>
    </location>
</feature>
<feature type="domain" description="Helicase ATP-binding" evidence="5">
    <location>
        <begin position="11"/>
        <end position="452"/>
    </location>
</feature>
<feature type="region of interest" description="Disordered" evidence="6">
    <location>
        <begin position="919"/>
        <end position="1008"/>
    </location>
</feature>
<feature type="region of interest" description="Disordered" evidence="6">
    <location>
        <begin position="1212"/>
        <end position="1252"/>
    </location>
</feature>
<feature type="short sequence motif" description="Nuclear localization signal" evidence="4">
    <location>
        <begin position="164"/>
        <end position="181"/>
    </location>
</feature>
<feature type="short sequence motif" description="DEAH box">
    <location>
        <begin position="403"/>
        <end position="406"/>
    </location>
</feature>
<feature type="compositionally biased region" description="Polar residues" evidence="6">
    <location>
        <begin position="920"/>
        <end position="930"/>
    </location>
</feature>
<feature type="compositionally biased region" description="Polar residues" evidence="6">
    <location>
        <begin position="952"/>
        <end position="969"/>
    </location>
</feature>
<feature type="compositionally biased region" description="Basic and acidic residues" evidence="6">
    <location>
        <begin position="989"/>
        <end position="1008"/>
    </location>
</feature>
<feature type="compositionally biased region" description="Acidic residues" evidence="6">
    <location>
        <begin position="1215"/>
        <end position="1224"/>
    </location>
</feature>
<feature type="compositionally biased region" description="Basic residues" evidence="6">
    <location>
        <begin position="1228"/>
        <end position="1239"/>
    </location>
</feature>
<feature type="binding site" evidence="5">
    <location>
        <begin position="191"/>
        <end position="198"/>
    </location>
    <ligand>
        <name>ATP</name>
        <dbReference type="ChEBI" id="CHEBI:30616"/>
    </ligand>
</feature>
<feature type="binding site" evidence="2">
    <location>
        <position position="292"/>
    </location>
    <ligand>
        <name>[4Fe-4S] cluster</name>
        <dbReference type="ChEBI" id="CHEBI:49883"/>
    </ligand>
</feature>
<feature type="binding site" evidence="2">
    <location>
        <position position="308"/>
    </location>
    <ligand>
        <name>[4Fe-4S] cluster</name>
        <dbReference type="ChEBI" id="CHEBI:49883"/>
    </ligand>
</feature>
<feature type="binding site" evidence="2">
    <location>
        <position position="320"/>
    </location>
    <ligand>
        <name>[4Fe-4S] cluster</name>
        <dbReference type="ChEBI" id="CHEBI:49883"/>
    </ligand>
</feature>
<feature type="binding site" evidence="2">
    <location>
        <position position="360"/>
    </location>
    <ligand>
        <name>[4Fe-4S] cluster</name>
        <dbReference type="ChEBI" id="CHEBI:49883"/>
    </ligand>
</feature>
<evidence type="ECO:0000250" key="1">
    <source>
        <dbReference type="UniProtKB" id="A0A8J1M587"/>
    </source>
</evidence>
<evidence type="ECO:0000250" key="2">
    <source>
        <dbReference type="UniProtKB" id="Q4JC68"/>
    </source>
</evidence>
<evidence type="ECO:0000250" key="3">
    <source>
        <dbReference type="UniProtKB" id="Q9BX63"/>
    </source>
</evidence>
<evidence type="ECO:0000255" key="4"/>
<evidence type="ECO:0000255" key="5">
    <source>
        <dbReference type="PROSITE-ProRule" id="PRU00541"/>
    </source>
</evidence>
<evidence type="ECO:0000256" key="6">
    <source>
        <dbReference type="SAM" id="MobiDB-lite"/>
    </source>
</evidence>
<evidence type="ECO:0000269" key="7">
    <source>
    </source>
</evidence>
<evidence type="ECO:0000305" key="8"/>
<dbReference type="EC" id="5.6.2.3" evidence="3"/>
<dbReference type="EMBL" id="DQ109581">
    <property type="protein sequence ID" value="AAZ66861.1"/>
    <property type="molecule type" value="mRNA"/>
</dbReference>
<dbReference type="RefSeq" id="NP_001028230.1">
    <property type="nucleotide sequence ID" value="NM_001033058.2"/>
</dbReference>
<dbReference type="RefSeq" id="NP_001385073.1">
    <property type="nucleotide sequence ID" value="NM_001398144.1"/>
</dbReference>
<dbReference type="RefSeq" id="XP_015151274.1">
    <property type="nucleotide sequence ID" value="XM_015295788.1"/>
</dbReference>
<dbReference type="RefSeq" id="XP_015151275.1">
    <property type="nucleotide sequence ID" value="XM_015295789.1"/>
</dbReference>
<dbReference type="SMR" id="Q3YK19"/>
<dbReference type="FunCoup" id="Q3YK19">
    <property type="interactions" value="1791"/>
</dbReference>
<dbReference type="STRING" id="9031.ENSGALP00000038436"/>
<dbReference type="PaxDb" id="9031-ENSGALP00000038436"/>
<dbReference type="Ensembl" id="ENSGALT00010070905.1">
    <property type="protein sequence ID" value="ENSGALP00010043596.1"/>
    <property type="gene ID" value="ENSGALG00010029319.1"/>
</dbReference>
<dbReference type="GeneID" id="417642"/>
<dbReference type="KEGG" id="gga:417642"/>
<dbReference type="CTD" id="83990"/>
<dbReference type="VEuPathDB" id="HostDB:geneid_417642"/>
<dbReference type="eggNOG" id="KOG1132">
    <property type="taxonomic scope" value="Eukaryota"/>
</dbReference>
<dbReference type="GeneTree" id="ENSGT00950000182970"/>
<dbReference type="HOGENOM" id="CLU_006515_1_0_1"/>
<dbReference type="InParanoid" id="Q3YK19"/>
<dbReference type="OrthoDB" id="19182at2759"/>
<dbReference type="PhylomeDB" id="Q3YK19"/>
<dbReference type="TreeFam" id="TF329449"/>
<dbReference type="Reactome" id="R-GGA-351465">
    <property type="pathway name" value="Fanconi Anemia Pathway in DNA repair"/>
</dbReference>
<dbReference type="Reactome" id="R-GGA-5685938">
    <property type="pathway name" value="HDR through Single Strand Annealing (SSA)"/>
</dbReference>
<dbReference type="Reactome" id="R-GGA-5685942">
    <property type="pathway name" value="HDR through Homologous Recombination (HRR)"/>
</dbReference>
<dbReference type="Reactome" id="R-GGA-5693568">
    <property type="pathway name" value="Resolution of D-loop Structures through Holliday Junction Intermediates"/>
</dbReference>
<dbReference type="Reactome" id="R-GGA-5693579">
    <property type="pathway name" value="Homologous DNA Pairing and Strand Exchange"/>
</dbReference>
<dbReference type="Reactome" id="R-GGA-5693607">
    <property type="pathway name" value="Processing of DNA double-strand break ends"/>
</dbReference>
<dbReference type="Reactome" id="R-GGA-5693616">
    <property type="pathway name" value="Presynaptic phase of homologous DNA pairing and strand exchange"/>
</dbReference>
<dbReference type="PRO" id="PR:Q3YK19"/>
<dbReference type="Proteomes" id="UP000000539">
    <property type="component" value="Chromosome 19"/>
</dbReference>
<dbReference type="Bgee" id="ENSGALG00000005279">
    <property type="expression patterns" value="Expressed in spermatid and 13 other cell types or tissues"/>
</dbReference>
<dbReference type="GO" id="GO:0005654">
    <property type="term" value="C:nucleoplasm"/>
    <property type="evidence" value="ECO:0000304"/>
    <property type="project" value="Reactome"/>
</dbReference>
<dbReference type="GO" id="GO:0005634">
    <property type="term" value="C:nucleus"/>
    <property type="evidence" value="ECO:0000318"/>
    <property type="project" value="GO_Central"/>
</dbReference>
<dbReference type="GO" id="GO:0051539">
    <property type="term" value="F:4 iron, 4 sulfur cluster binding"/>
    <property type="evidence" value="ECO:0007669"/>
    <property type="project" value="UniProtKB-KW"/>
</dbReference>
<dbReference type="GO" id="GO:0043139">
    <property type="term" value="F:5'-3' DNA helicase activity"/>
    <property type="evidence" value="ECO:0000250"/>
    <property type="project" value="UniProtKB"/>
</dbReference>
<dbReference type="GO" id="GO:0005524">
    <property type="term" value="F:ATP binding"/>
    <property type="evidence" value="ECO:0007669"/>
    <property type="project" value="UniProtKB-KW"/>
</dbReference>
<dbReference type="GO" id="GO:0016887">
    <property type="term" value="F:ATP hydrolysis activity"/>
    <property type="evidence" value="ECO:0007669"/>
    <property type="project" value="RHEA"/>
</dbReference>
<dbReference type="GO" id="GO:0003677">
    <property type="term" value="F:DNA binding"/>
    <property type="evidence" value="ECO:0007669"/>
    <property type="project" value="InterPro"/>
</dbReference>
<dbReference type="GO" id="GO:0003678">
    <property type="term" value="F:DNA helicase activity"/>
    <property type="evidence" value="ECO:0000318"/>
    <property type="project" value="GO_Central"/>
</dbReference>
<dbReference type="GO" id="GO:0046872">
    <property type="term" value="F:metal ion binding"/>
    <property type="evidence" value="ECO:0007669"/>
    <property type="project" value="UniProtKB-KW"/>
</dbReference>
<dbReference type="GO" id="GO:0003724">
    <property type="term" value="F:RNA helicase activity"/>
    <property type="evidence" value="ECO:0007669"/>
    <property type="project" value="UniProtKB-EC"/>
</dbReference>
<dbReference type="GO" id="GO:0006281">
    <property type="term" value="P:DNA repair"/>
    <property type="evidence" value="ECO:0000304"/>
    <property type="project" value="Reactome"/>
</dbReference>
<dbReference type="GO" id="GO:1990918">
    <property type="term" value="P:double-strand break repair involved in meiotic recombination"/>
    <property type="evidence" value="ECO:0000318"/>
    <property type="project" value="GO_Central"/>
</dbReference>
<dbReference type="GO" id="GO:0006289">
    <property type="term" value="P:nucleotide-excision repair"/>
    <property type="evidence" value="ECO:0000318"/>
    <property type="project" value="GO_Central"/>
</dbReference>
<dbReference type="GO" id="GO:0106300">
    <property type="term" value="P:protein-DNA covalent cross-linking repair"/>
    <property type="evidence" value="ECO:0000250"/>
    <property type="project" value="UniProtKB"/>
</dbReference>
<dbReference type="CDD" id="cd18788">
    <property type="entry name" value="SF2_C_XPD"/>
    <property type="match status" value="1"/>
</dbReference>
<dbReference type="FunFam" id="3.40.50.300:FF:004771">
    <property type="entry name" value="BRCA1 interacting protein C-terminal helicase 1"/>
    <property type="match status" value="1"/>
</dbReference>
<dbReference type="FunFam" id="3.40.50.300:FF:000731">
    <property type="entry name" value="Fanconi anemia group J protein homolog"/>
    <property type="match status" value="1"/>
</dbReference>
<dbReference type="Gene3D" id="3.40.50.300">
    <property type="entry name" value="P-loop containing nucleotide triphosphate hydrolases"/>
    <property type="match status" value="3"/>
</dbReference>
<dbReference type="InterPro" id="IPR006555">
    <property type="entry name" value="ATP-dep_Helicase_C"/>
</dbReference>
<dbReference type="InterPro" id="IPR045028">
    <property type="entry name" value="DinG/Rad3-like"/>
</dbReference>
<dbReference type="InterPro" id="IPR014013">
    <property type="entry name" value="Helic_SF1/SF2_ATP-bd_DinG/Rad3"/>
</dbReference>
<dbReference type="InterPro" id="IPR006554">
    <property type="entry name" value="Helicase-like_DEXD_c2"/>
</dbReference>
<dbReference type="InterPro" id="IPR027417">
    <property type="entry name" value="P-loop_NTPase"/>
</dbReference>
<dbReference type="InterPro" id="IPR010614">
    <property type="entry name" value="RAD3-like_helicase_DEAD"/>
</dbReference>
<dbReference type="InterPro" id="IPR013020">
    <property type="entry name" value="Rad3/Chl1-like"/>
</dbReference>
<dbReference type="NCBIfam" id="TIGR00604">
    <property type="entry name" value="rad3"/>
    <property type="match status" value="1"/>
</dbReference>
<dbReference type="PANTHER" id="PTHR11472">
    <property type="entry name" value="DNA REPAIR DEAD HELICASE RAD3/XP-D SUBFAMILY MEMBER"/>
    <property type="match status" value="1"/>
</dbReference>
<dbReference type="PANTHER" id="PTHR11472:SF47">
    <property type="entry name" value="FANCONI ANEMIA GROUP J PROTEIN"/>
    <property type="match status" value="1"/>
</dbReference>
<dbReference type="Pfam" id="PF06733">
    <property type="entry name" value="DEAD_2"/>
    <property type="match status" value="1"/>
</dbReference>
<dbReference type="Pfam" id="PF13307">
    <property type="entry name" value="Helicase_C_2"/>
    <property type="match status" value="1"/>
</dbReference>
<dbReference type="SMART" id="SM00488">
    <property type="entry name" value="DEXDc2"/>
    <property type="match status" value="1"/>
</dbReference>
<dbReference type="SMART" id="SM00491">
    <property type="entry name" value="HELICc2"/>
    <property type="match status" value="1"/>
</dbReference>
<dbReference type="SUPFAM" id="SSF52540">
    <property type="entry name" value="P-loop containing nucleoside triphosphate hydrolases"/>
    <property type="match status" value="2"/>
</dbReference>
<dbReference type="PROSITE" id="PS51193">
    <property type="entry name" value="HELICASE_ATP_BIND_2"/>
    <property type="match status" value="1"/>
</dbReference>
<proteinExistence type="evidence at transcript level"/>
<keyword id="KW-0004">4Fe-4S</keyword>
<keyword id="KW-0067">ATP-binding</keyword>
<keyword id="KW-0227">DNA damage</keyword>
<keyword id="KW-0234">DNA repair</keyword>
<keyword id="KW-0347">Helicase</keyword>
<keyword id="KW-0378">Hydrolase</keyword>
<keyword id="KW-0408">Iron</keyword>
<keyword id="KW-0411">Iron-sulfur</keyword>
<keyword id="KW-0413">Isomerase</keyword>
<keyword id="KW-0479">Metal-binding</keyword>
<keyword id="KW-0547">Nucleotide-binding</keyword>
<keyword id="KW-0539">Nucleus</keyword>
<keyword id="KW-1185">Reference proteome</keyword>
<accession>Q3YK19</accession>
<gene>
    <name type="primary">BRIP1</name>
    <name type="synonym">FANCJ</name>
</gene>
<comment type="function">
    <text evidence="1 3 7">DNA-dependent helicase and 5' to 3' DNA helicase required for the maintenance of chromosomal stability (PubMed:16116421). Involved in the repair of DNA double-strand breaks by homologous recombination (By similarity). Involved in the repair of abasic sites at replication forks by promoting the degradation of DNA-protein cross-links: acts by catalyzing unfolding of HMCES DNA-protein cross-link via its helicase activity, exposing the underlying DNA and enabling cleavage of the DNA-protein adduct by the SPRTN metalloprotease (By similarity).</text>
</comment>
<comment type="catalytic activity">
    <reaction evidence="3">
        <text>Couples ATP hydrolysis with the unwinding of duplex DNA at the replication fork by translocating in the 5'-3' direction. This creates two antiparallel DNA single strands (ssDNA). The leading ssDNA polymer is the template for DNA polymerase III holoenzyme which synthesizes a continuous strand.</text>
        <dbReference type="EC" id="5.6.2.3"/>
    </reaction>
</comment>
<comment type="catalytic activity">
    <reaction evidence="3">
        <text>ATP + H2O = ADP + phosphate + H(+)</text>
        <dbReference type="Rhea" id="RHEA:13065"/>
        <dbReference type="ChEBI" id="CHEBI:15377"/>
        <dbReference type="ChEBI" id="CHEBI:15378"/>
        <dbReference type="ChEBI" id="CHEBI:30616"/>
        <dbReference type="ChEBI" id="CHEBI:43474"/>
        <dbReference type="ChEBI" id="CHEBI:456216"/>
        <dbReference type="EC" id="5.6.2.3"/>
    </reaction>
</comment>
<comment type="cofactor">
    <cofactor evidence="3">
        <name>[4Fe-4S] cluster</name>
        <dbReference type="ChEBI" id="CHEBI:49883"/>
    </cofactor>
    <text evidence="3">Binds 1 [4Fe-4S] cluster.</text>
</comment>
<comment type="subcellular location">
    <subcellularLocation>
        <location evidence="3">Nucleus</location>
    </subcellularLocation>
</comment>
<comment type="domain">
    <text evidence="3">4Fe-4S iron-sulfur-binding is required for helicase activity.</text>
</comment>
<comment type="similarity">
    <text evidence="8">Belongs to the DEAD box helicase family. DEAH subfamily.</text>
</comment>
<organism>
    <name type="scientific">Gallus gallus</name>
    <name type="common">Chicken</name>
    <dbReference type="NCBI Taxonomy" id="9031"/>
    <lineage>
        <taxon>Eukaryota</taxon>
        <taxon>Metazoa</taxon>
        <taxon>Chordata</taxon>
        <taxon>Craniata</taxon>
        <taxon>Vertebrata</taxon>
        <taxon>Euteleostomi</taxon>
        <taxon>Archelosauria</taxon>
        <taxon>Archosauria</taxon>
        <taxon>Dinosauria</taxon>
        <taxon>Saurischia</taxon>
        <taxon>Theropoda</taxon>
        <taxon>Coelurosauria</taxon>
        <taxon>Aves</taxon>
        <taxon>Neognathae</taxon>
        <taxon>Galloanserae</taxon>
        <taxon>Galliformes</taxon>
        <taxon>Phasianidae</taxon>
        <taxon>Phasianinae</taxon>
        <taxon>Gallus</taxon>
    </lineage>
</organism>
<reference key="1">
    <citation type="journal article" date="2005" name="Nat. Genet.">
        <title>The BRIP1 helicase functions independently of BRCA1 in the Fanconi anemia pathway for DNA crosslink repair.</title>
        <authorList>
            <person name="Bridge W.L."/>
            <person name="Vandenberg C.J."/>
            <person name="Franklin R.J."/>
            <person name="Hiom K."/>
        </authorList>
    </citation>
    <scope>NUCLEOTIDE SEQUENCE [MRNA]</scope>
    <scope>FUNCTION</scope>
</reference>
<protein>
    <recommendedName>
        <fullName>Fanconi anemia group J protein homolog</fullName>
        <ecNumber evidence="3">5.6.2.3</ecNumber>
    </recommendedName>
    <alternativeName>
        <fullName evidence="8">DNA 5'-3' helicase FANCJ</fullName>
    </alternativeName>
</protein>